<proteinExistence type="inferred from homology"/>
<accession>Q54P13</accession>
<accession>Q8T6H1</accession>
<reference key="1">
    <citation type="journal article" date="2002" name="Eukaryot. Cell">
        <title>Evolutionary analyses of ABC transporters of Dictyostelium discoideum.</title>
        <authorList>
            <person name="Anjard C."/>
            <person name="Loomis W.F."/>
        </authorList>
    </citation>
    <scope>NUCLEOTIDE SEQUENCE [GENOMIC DNA]</scope>
    <scope>NOMENCLATURE</scope>
    <source>
        <strain>AX4</strain>
    </source>
</reference>
<reference key="2">
    <citation type="journal article" date="2005" name="Nature">
        <title>The genome of the social amoeba Dictyostelium discoideum.</title>
        <authorList>
            <person name="Eichinger L."/>
            <person name="Pachebat J.A."/>
            <person name="Gloeckner G."/>
            <person name="Rajandream M.A."/>
            <person name="Sucgang R."/>
            <person name="Berriman M."/>
            <person name="Song J."/>
            <person name="Olsen R."/>
            <person name="Szafranski K."/>
            <person name="Xu Q."/>
            <person name="Tunggal B."/>
            <person name="Kummerfeld S."/>
            <person name="Madera M."/>
            <person name="Konfortov B.A."/>
            <person name="Rivero F."/>
            <person name="Bankier A.T."/>
            <person name="Lehmann R."/>
            <person name="Hamlin N."/>
            <person name="Davies R."/>
            <person name="Gaudet P."/>
            <person name="Fey P."/>
            <person name="Pilcher K."/>
            <person name="Chen G."/>
            <person name="Saunders D."/>
            <person name="Sodergren E.J."/>
            <person name="Davis P."/>
            <person name="Kerhornou A."/>
            <person name="Nie X."/>
            <person name="Hall N."/>
            <person name="Anjard C."/>
            <person name="Hemphill L."/>
            <person name="Bason N."/>
            <person name="Farbrother P."/>
            <person name="Desany B."/>
            <person name="Just E."/>
            <person name="Morio T."/>
            <person name="Rost R."/>
            <person name="Churcher C.M."/>
            <person name="Cooper J."/>
            <person name="Haydock S."/>
            <person name="van Driessche N."/>
            <person name="Cronin A."/>
            <person name="Goodhead I."/>
            <person name="Muzny D.M."/>
            <person name="Mourier T."/>
            <person name="Pain A."/>
            <person name="Lu M."/>
            <person name="Harper D."/>
            <person name="Lindsay R."/>
            <person name="Hauser H."/>
            <person name="James K.D."/>
            <person name="Quiles M."/>
            <person name="Madan Babu M."/>
            <person name="Saito T."/>
            <person name="Buchrieser C."/>
            <person name="Wardroper A."/>
            <person name="Felder M."/>
            <person name="Thangavelu M."/>
            <person name="Johnson D."/>
            <person name="Knights A."/>
            <person name="Loulseged H."/>
            <person name="Mungall K.L."/>
            <person name="Oliver K."/>
            <person name="Price C."/>
            <person name="Quail M.A."/>
            <person name="Urushihara H."/>
            <person name="Hernandez J."/>
            <person name="Rabbinowitsch E."/>
            <person name="Steffen D."/>
            <person name="Sanders M."/>
            <person name="Ma J."/>
            <person name="Kohara Y."/>
            <person name="Sharp S."/>
            <person name="Simmonds M.N."/>
            <person name="Spiegler S."/>
            <person name="Tivey A."/>
            <person name="Sugano S."/>
            <person name="White B."/>
            <person name="Walker D."/>
            <person name="Woodward J.R."/>
            <person name="Winckler T."/>
            <person name="Tanaka Y."/>
            <person name="Shaulsky G."/>
            <person name="Schleicher M."/>
            <person name="Weinstock G.M."/>
            <person name="Rosenthal A."/>
            <person name="Cox E.C."/>
            <person name="Chisholm R.L."/>
            <person name="Gibbs R.A."/>
            <person name="Loomis W.F."/>
            <person name="Platzer M."/>
            <person name="Kay R.R."/>
            <person name="Williams J.G."/>
            <person name="Dear P.H."/>
            <person name="Noegel A.A."/>
            <person name="Barrell B.G."/>
            <person name="Kuspa A."/>
        </authorList>
    </citation>
    <scope>NUCLEOTIDE SEQUENCE [LARGE SCALE GENOMIC DNA]</scope>
    <source>
        <strain>AX4</strain>
    </source>
</reference>
<dbReference type="EMBL" id="AF474340">
    <property type="protein sequence ID" value="AAL85711.1"/>
    <property type="molecule type" value="Genomic_DNA"/>
</dbReference>
<dbReference type="EMBL" id="AAFI02000073">
    <property type="protein sequence ID" value="EAL64897.1"/>
    <property type="molecule type" value="Genomic_DNA"/>
</dbReference>
<dbReference type="RefSeq" id="XP_639904.1">
    <property type="nucleotide sequence ID" value="XM_634812.1"/>
</dbReference>
<dbReference type="SMR" id="Q54P13"/>
<dbReference type="FunCoup" id="Q54P13">
    <property type="interactions" value="83"/>
</dbReference>
<dbReference type="STRING" id="44689.Q54P13"/>
<dbReference type="PaxDb" id="44689-DDB0191225"/>
<dbReference type="EnsemblProtists" id="EAL64897">
    <property type="protein sequence ID" value="EAL64897"/>
    <property type="gene ID" value="DDB_G0284867"/>
</dbReference>
<dbReference type="GeneID" id="8624816"/>
<dbReference type="KEGG" id="ddi:DDB_G0284867"/>
<dbReference type="dictyBase" id="DDB_G0284867">
    <property type="gene designation" value="abcC8"/>
</dbReference>
<dbReference type="VEuPathDB" id="AmoebaDB:DDB_G0284867"/>
<dbReference type="eggNOG" id="KOG0054">
    <property type="taxonomic scope" value="Eukaryota"/>
</dbReference>
<dbReference type="HOGENOM" id="CLU_000604_27_3_1"/>
<dbReference type="InParanoid" id="Q54P13"/>
<dbReference type="OMA" id="CFETGMR"/>
<dbReference type="PhylomeDB" id="Q54P13"/>
<dbReference type="Reactome" id="R-DDI-159418">
    <property type="pathway name" value="Recycling of bile acids and salts"/>
</dbReference>
<dbReference type="Reactome" id="R-DDI-189483">
    <property type="pathway name" value="Heme degradation"/>
</dbReference>
<dbReference type="Reactome" id="R-DDI-382556">
    <property type="pathway name" value="ABC-family proteins mediated transport"/>
</dbReference>
<dbReference type="Reactome" id="R-DDI-9749641">
    <property type="pathway name" value="Aspirin ADME"/>
</dbReference>
<dbReference type="Reactome" id="R-DDI-9753281">
    <property type="pathway name" value="Paracetamol ADME"/>
</dbReference>
<dbReference type="Reactome" id="R-DDI-9754706">
    <property type="pathway name" value="Atorvastatin ADME"/>
</dbReference>
<dbReference type="PRO" id="PR:Q54P13"/>
<dbReference type="Proteomes" id="UP000002195">
    <property type="component" value="Chromosome 4"/>
</dbReference>
<dbReference type="GO" id="GO:0016020">
    <property type="term" value="C:membrane"/>
    <property type="evidence" value="ECO:0000318"/>
    <property type="project" value="GO_Central"/>
</dbReference>
<dbReference type="GO" id="GO:0140359">
    <property type="term" value="F:ABC-type transporter activity"/>
    <property type="evidence" value="ECO:0007669"/>
    <property type="project" value="InterPro"/>
</dbReference>
<dbReference type="GO" id="GO:0005524">
    <property type="term" value="F:ATP binding"/>
    <property type="evidence" value="ECO:0007669"/>
    <property type="project" value="UniProtKB-KW"/>
</dbReference>
<dbReference type="GO" id="GO:0016887">
    <property type="term" value="F:ATP hydrolysis activity"/>
    <property type="evidence" value="ECO:0007669"/>
    <property type="project" value="InterPro"/>
</dbReference>
<dbReference type="GO" id="GO:0042626">
    <property type="term" value="F:ATPase-coupled transmembrane transporter activity"/>
    <property type="evidence" value="ECO:0000318"/>
    <property type="project" value="GO_Central"/>
</dbReference>
<dbReference type="GO" id="GO:0031154">
    <property type="term" value="P:culmination involved in sorocarp development"/>
    <property type="evidence" value="ECO:0000315"/>
    <property type="project" value="dictyBase"/>
</dbReference>
<dbReference type="GO" id="GO:0031288">
    <property type="term" value="P:sorocarp morphogenesis"/>
    <property type="evidence" value="ECO:0000315"/>
    <property type="project" value="dictyBase"/>
</dbReference>
<dbReference type="GO" id="GO:0055085">
    <property type="term" value="P:transmembrane transport"/>
    <property type="evidence" value="ECO:0000318"/>
    <property type="project" value="GO_Central"/>
</dbReference>
<dbReference type="CDD" id="cd18595">
    <property type="entry name" value="ABC_6TM_MRP1_2_3_6_D1_like"/>
    <property type="match status" value="1"/>
</dbReference>
<dbReference type="CDD" id="cd18603">
    <property type="entry name" value="ABC_6TM_MRP1_2_3_6_D2_like"/>
    <property type="match status" value="1"/>
</dbReference>
<dbReference type="CDD" id="cd03250">
    <property type="entry name" value="ABCC_MRP_domain1"/>
    <property type="match status" value="1"/>
</dbReference>
<dbReference type="CDD" id="cd03244">
    <property type="entry name" value="ABCC_MRP_domain2"/>
    <property type="match status" value="1"/>
</dbReference>
<dbReference type="FunFam" id="1.20.1560.10:FF:000139">
    <property type="entry name" value="ATP-binding Cassette (ABC) Superfamily"/>
    <property type="match status" value="1"/>
</dbReference>
<dbReference type="FunFam" id="1.20.1560.10:FF:000010">
    <property type="entry name" value="Multidrug resistance-associated ABC transporter"/>
    <property type="match status" value="1"/>
</dbReference>
<dbReference type="FunFam" id="3.40.50.300:FF:000997">
    <property type="entry name" value="Multidrug resistance-associated protein 1"/>
    <property type="match status" value="1"/>
</dbReference>
<dbReference type="FunFam" id="3.40.50.300:FF:000074">
    <property type="entry name" value="Multidrug resistance-associated protein 5 isoform 1"/>
    <property type="match status" value="1"/>
</dbReference>
<dbReference type="Gene3D" id="1.20.1560.10">
    <property type="entry name" value="ABC transporter type 1, transmembrane domain"/>
    <property type="match status" value="2"/>
</dbReference>
<dbReference type="Gene3D" id="3.40.50.300">
    <property type="entry name" value="P-loop containing nucleotide triphosphate hydrolases"/>
    <property type="match status" value="2"/>
</dbReference>
<dbReference type="InterPro" id="IPR003593">
    <property type="entry name" value="AAA+_ATPase"/>
</dbReference>
<dbReference type="InterPro" id="IPR011527">
    <property type="entry name" value="ABC1_TM_dom"/>
</dbReference>
<dbReference type="InterPro" id="IPR036640">
    <property type="entry name" value="ABC1_TM_sf"/>
</dbReference>
<dbReference type="InterPro" id="IPR003439">
    <property type="entry name" value="ABC_transporter-like_ATP-bd"/>
</dbReference>
<dbReference type="InterPro" id="IPR017871">
    <property type="entry name" value="ABC_transporter-like_CS"/>
</dbReference>
<dbReference type="InterPro" id="IPR050173">
    <property type="entry name" value="ABC_transporter_C-like"/>
</dbReference>
<dbReference type="InterPro" id="IPR027417">
    <property type="entry name" value="P-loop_NTPase"/>
</dbReference>
<dbReference type="InterPro" id="IPR056227">
    <property type="entry name" value="TMD0_ABC"/>
</dbReference>
<dbReference type="PANTHER" id="PTHR24223">
    <property type="entry name" value="ATP-BINDING CASSETTE SUB-FAMILY C"/>
    <property type="match status" value="1"/>
</dbReference>
<dbReference type="PANTHER" id="PTHR24223:SF443">
    <property type="entry name" value="MULTIDRUG-RESISTANCE LIKE PROTEIN 1, ISOFORM I"/>
    <property type="match status" value="1"/>
</dbReference>
<dbReference type="Pfam" id="PF00664">
    <property type="entry name" value="ABC_membrane"/>
    <property type="match status" value="2"/>
</dbReference>
<dbReference type="Pfam" id="PF00005">
    <property type="entry name" value="ABC_tran"/>
    <property type="match status" value="2"/>
</dbReference>
<dbReference type="Pfam" id="PF24357">
    <property type="entry name" value="TMD0_ABC"/>
    <property type="match status" value="1"/>
</dbReference>
<dbReference type="SMART" id="SM00382">
    <property type="entry name" value="AAA"/>
    <property type="match status" value="2"/>
</dbReference>
<dbReference type="SUPFAM" id="SSF90123">
    <property type="entry name" value="ABC transporter transmembrane region"/>
    <property type="match status" value="2"/>
</dbReference>
<dbReference type="SUPFAM" id="SSF52540">
    <property type="entry name" value="P-loop containing nucleoside triphosphate hydrolases"/>
    <property type="match status" value="2"/>
</dbReference>
<dbReference type="PROSITE" id="PS50929">
    <property type="entry name" value="ABC_TM1F"/>
    <property type="match status" value="2"/>
</dbReference>
<dbReference type="PROSITE" id="PS00211">
    <property type="entry name" value="ABC_TRANSPORTER_1"/>
    <property type="match status" value="2"/>
</dbReference>
<dbReference type="PROSITE" id="PS50893">
    <property type="entry name" value="ABC_TRANSPORTER_2"/>
    <property type="match status" value="2"/>
</dbReference>
<gene>
    <name type="primary">abcC8</name>
    <name type="ORF">DDB_G0284867</name>
</gene>
<evidence type="ECO:0000255" key="1"/>
<evidence type="ECO:0000255" key="2">
    <source>
        <dbReference type="PROSITE-ProRule" id="PRU00434"/>
    </source>
</evidence>
<evidence type="ECO:0000255" key="3">
    <source>
        <dbReference type="PROSITE-ProRule" id="PRU00441"/>
    </source>
</evidence>
<evidence type="ECO:0000256" key="4">
    <source>
        <dbReference type="SAM" id="MobiDB-lite"/>
    </source>
</evidence>
<evidence type="ECO:0000305" key="5"/>
<comment type="subcellular location">
    <subcellularLocation>
        <location evidence="3">Membrane</location>
        <topology evidence="3">Multi-pass membrane protein</topology>
    </subcellularLocation>
</comment>
<comment type="similarity">
    <text evidence="5">Belongs to the ABC transporter superfamily. ABCC family. Conjugate transporter (TC 3.A.1.208) subfamily.</text>
</comment>
<protein>
    <recommendedName>
        <fullName>ABC transporter C family member 8</fullName>
    </recommendedName>
    <alternativeName>
        <fullName>ABC transporter ABCC.8</fullName>
    </alternativeName>
</protein>
<sequence length="1593" mass="178339">MGFCGDEPFTVWHNDSGDFSKCFEDSVVMTLPAIYLLIFGMKRLYYLENKKPDLFTLKQLSQDFQTWRKTLQLEVIVSILLVAWKILFFIVIVSIYNKPFEILYSVVTVVQWTVSLGLVYLEMKKGQSRSWEIRLYWVFAFFVATVKLRTLTLAIAGKSIYNVGFLEYFSYFVGYCLILILSITSVLFFDNLESYQNLEENEISKEVNANLFSRLTFWWINSVLVKGHKKALEISDVPTLGEIDQSILLSEKFEKAWEEQLKKPNPSLPWALAKAFGPHFYIAALFKIIQDLLIFVGPTLLKRVLGFVESRDGSQDTYDGLIYALLYFLAPVVQSLLLHQYFHRCYRVGMWLRSAVVTAVYKKALKTSLREGTTIGEIVNLMSVDAQKFMDLCPYLHMIWSAPLQLAISLVLLYRILNASVFAGLGIMLVMIPINLAISNLAKKRQTISMKLKDRRTKAVNEVLNGIKVIKLYSWEQSFMDHVNEIRNKELDVMKAIKYIQGFSLLLWSMSPVFVSVSTFTVYILTGQVLSATQAFPALSLFNVMQFPINMLPSVVSSIIEASVSVARLQKFLLKKDLDPNVVEHHINEPGIAVKIDNATLEWEPNKPILHDINLTIKKGELVAIVGQVGSGKSSIVSSLVGDLDKTKGTVAVNGSVALVSQQAWIQNATLKNNILFAKELNQDKYQSVVQACCLEPDIKILPGGDQTEIGEKGINLSGGQKQRVSIARAVYNNADIYIFDDPLSAVDAHVGKAIFKNVLSNQDGILCNKTRILVTHAVHYLPYVDRIILMKDGRIVEEGDFNTLIEAGSHFTELMSHDEQQQQLQQQQAPDKSSDSNEQIGGGDNKESENNEEQNEEEEGENENLLEKVLRKSRSRSPSPSSNRNIDGDDIASGSILQTTRTPEEDEQDERELMEDIDIDGGENIQTPLQKGEKSSVLKQPLRLLKKLPTSINKKLNNSGSGVSLKPITTVNAKPQDKNKIISVETKQEGKVSFKIYLSYFKAIGVLLATCIIGFYVLTQLLSILANWWISIWTNSYGGNGNGSGSGSISLSSSSTVEDNEKAKYYLSIYVAFSCGTIAATFLRSFSMVFGSIKGSKLFHEKMFKAVILSPMSFFDTTPIGRILNRFSKDQLTIDESIARTLGMFLNTFCQVVGSIIVIAWVSPFIILAMVPVGALFYFIQKYYLNSSRELTRLEGVSRSPIYAHFSETLAGVTTIRAFKDVARFVTENERLLDENQKCYYINISSNRWLAIRLEFLGACLVSCAVLYTVLARSRIEAGTAGLVITYALAITGNMNWMVRMSCDLENSVVSIERIQEYCLLPSEAPLFNDKSVPMSWPSHGKIVFKNLWLTYREGLDPVLRGINCTIEPKTKVGIVGRTGAGKSSLTQALFRLVEPLRGTIEIDGIDITELGLNPLRSRMAIIPQDPVLFAGSVRYNLDPFDQYDDHEIWEAIENAHLLKAIKDLDGGLDAMVQDGGDNFSVGQRQLLVIGRALLKKANIIVLDEASSSIDIASDALIQETIRTKFADCTVLTIAHRLGTIADSDKIMVLDKGELIEYDSPSELLKNQDSIYYSLVKASESKQNIDNDDESN</sequence>
<feature type="chain" id="PRO_0000363853" description="ABC transporter C family member 8">
    <location>
        <begin position="1"/>
        <end position="1593"/>
    </location>
</feature>
<feature type="transmembrane region" description="Helical" evidence="3">
    <location>
        <begin position="27"/>
        <end position="47"/>
    </location>
</feature>
<feature type="transmembrane region" description="Helical" evidence="3">
    <location>
        <begin position="75"/>
        <end position="95"/>
    </location>
</feature>
<feature type="transmembrane region" description="Helical" evidence="3">
    <location>
        <begin position="100"/>
        <end position="120"/>
    </location>
</feature>
<feature type="transmembrane region" description="Helical" evidence="3">
    <location>
        <begin position="135"/>
        <end position="155"/>
    </location>
</feature>
<feature type="transmembrane region" description="Helical" evidence="3">
    <location>
        <begin position="169"/>
        <end position="189"/>
    </location>
</feature>
<feature type="transmembrane region" description="Helical" evidence="3">
    <location>
        <begin position="280"/>
        <end position="300"/>
    </location>
</feature>
<feature type="transmembrane region" description="Helical" evidence="3">
    <location>
        <begin position="318"/>
        <end position="338"/>
    </location>
</feature>
<feature type="transmembrane region" description="Helical" evidence="3">
    <location>
        <begin position="392"/>
        <end position="412"/>
    </location>
</feature>
<feature type="transmembrane region" description="Helical" evidence="3">
    <location>
        <begin position="419"/>
        <end position="439"/>
    </location>
</feature>
<feature type="transmembrane region" description="Helical" evidence="3">
    <location>
        <begin position="505"/>
        <end position="525"/>
    </location>
</feature>
<feature type="transmembrane region" description="Helical" evidence="3">
    <location>
        <begin position="1005"/>
        <end position="1025"/>
    </location>
</feature>
<feature type="transmembrane region" description="Helical" evidence="3">
    <location>
        <begin position="1064"/>
        <end position="1084"/>
    </location>
</feature>
<feature type="transmembrane region" description="Helical" evidence="3">
    <location>
        <begin position="1157"/>
        <end position="1177"/>
    </location>
</feature>
<feature type="transmembrane region" description="Helical" evidence="3">
    <location>
        <begin position="1251"/>
        <end position="1271"/>
    </location>
</feature>
<feature type="transmembrane region" description="Helical" evidence="3">
    <location>
        <begin position="1280"/>
        <end position="1300"/>
    </location>
</feature>
<feature type="domain" description="ABC transmembrane type-1 1" evidence="3">
    <location>
        <begin position="280"/>
        <end position="561"/>
    </location>
</feature>
<feature type="domain" description="ABC transporter 1" evidence="2">
    <location>
        <begin position="594"/>
        <end position="818"/>
    </location>
</feature>
<feature type="domain" description="ABC transmembrane type-1 2" evidence="3">
    <location>
        <begin position="1010"/>
        <end position="1308"/>
    </location>
</feature>
<feature type="domain" description="ABC transporter 2" evidence="2">
    <location>
        <begin position="1344"/>
        <end position="1578"/>
    </location>
</feature>
<feature type="region of interest" description="Disordered" evidence="4">
    <location>
        <begin position="816"/>
        <end position="938"/>
    </location>
</feature>
<feature type="coiled-coil region" evidence="1">
    <location>
        <begin position="844"/>
        <end position="875"/>
    </location>
</feature>
<feature type="compositionally biased region" description="Acidic residues" evidence="4">
    <location>
        <begin position="851"/>
        <end position="865"/>
    </location>
</feature>
<feature type="compositionally biased region" description="Low complexity" evidence="4">
    <location>
        <begin position="877"/>
        <end position="886"/>
    </location>
</feature>
<feature type="compositionally biased region" description="Acidic residues" evidence="4">
    <location>
        <begin position="905"/>
        <end position="922"/>
    </location>
</feature>
<feature type="binding site" evidence="2">
    <location>
        <begin position="627"/>
        <end position="634"/>
    </location>
    <ligand>
        <name>ATP</name>
        <dbReference type="ChEBI" id="CHEBI:30616"/>
    </ligand>
</feature>
<feature type="binding site" evidence="2">
    <location>
        <begin position="1378"/>
        <end position="1385"/>
    </location>
    <ligand>
        <name>ATP</name>
        <dbReference type="ChEBI" id="CHEBI:30616"/>
    </ligand>
</feature>
<feature type="sequence conflict" description="In Ref. 1; AAL85711." evidence="5" ref="1">
    <original>S</original>
    <variation>F</variation>
    <location>
        <position position="61"/>
    </location>
</feature>
<feature type="sequence conflict" description="In Ref. 1; AAL85711." evidence="5" ref="1">
    <original>E</original>
    <variation>K</variation>
    <location>
        <position position="1325"/>
    </location>
</feature>
<feature type="sequence conflict" description="In Ref. 1; AAL85711." evidence="5" ref="1">
    <original>D</original>
    <variation>N</variation>
    <location>
        <position position="1587"/>
    </location>
</feature>
<keyword id="KW-0067">ATP-binding</keyword>
<keyword id="KW-0175">Coiled coil</keyword>
<keyword id="KW-0472">Membrane</keyword>
<keyword id="KW-0547">Nucleotide-binding</keyword>
<keyword id="KW-1185">Reference proteome</keyword>
<keyword id="KW-0677">Repeat</keyword>
<keyword id="KW-0812">Transmembrane</keyword>
<keyword id="KW-1133">Transmembrane helix</keyword>
<keyword id="KW-0813">Transport</keyword>
<organism>
    <name type="scientific">Dictyostelium discoideum</name>
    <name type="common">Social amoeba</name>
    <dbReference type="NCBI Taxonomy" id="44689"/>
    <lineage>
        <taxon>Eukaryota</taxon>
        <taxon>Amoebozoa</taxon>
        <taxon>Evosea</taxon>
        <taxon>Eumycetozoa</taxon>
        <taxon>Dictyostelia</taxon>
        <taxon>Dictyosteliales</taxon>
        <taxon>Dictyosteliaceae</taxon>
        <taxon>Dictyostelium</taxon>
    </lineage>
</organism>
<name>ABCC8_DICDI</name>